<accession>Q5W111</accession>
<accession>A8K3G1</accession>
<accession>O60648</accession>
<accession>Q8TBG8</accession>
<accession>Q96T69</accession>
<comment type="interaction">
    <interactant intactId="EBI-10248098">
        <id>Q5W111</id>
    </interactant>
    <interactant intactId="EBI-1058722">
        <id>Q13554</id>
        <label>CAMK2B</label>
    </interactant>
    <organismsDiffer>false</organismsDiffer>
    <experiments>3</experiments>
</comment>
<comment type="interaction">
    <interactant intactId="EBI-10248098">
        <id>Q5W111</id>
    </interactant>
    <interactant intactId="EBI-8744528">
        <id>Q86UT5</id>
        <label>NHERF4</label>
    </interactant>
    <organismsDiffer>false</organismsDiffer>
    <experiments>3</experiments>
</comment>
<comment type="interaction">
    <interactant intactId="EBI-10248098">
        <id>Q5W111</id>
    </interactant>
    <interactant intactId="EBI-358993">
        <id>Q15645</id>
        <label>TRIP13</label>
    </interactant>
    <organismsDiffer>false</organismsDiffer>
    <experiments>3</experiments>
</comment>
<comment type="interaction">
    <interactant intactId="EBI-10248098">
        <id>Q5W111</id>
    </interactant>
    <interactant intactId="EBI-2107455">
        <id>Q08AM6</id>
        <label>VAC14</label>
    </interactant>
    <organismsDiffer>false</organismsDiffer>
    <experiments>4</experiments>
</comment>
<comment type="interaction">
    <interactant intactId="EBI-12408727">
        <id>Q5W111-2</id>
    </interactant>
    <interactant intactId="EBI-727098">
        <id>P21549</id>
        <label>AGXT</label>
    </interactant>
    <organismsDiffer>false</organismsDiffer>
    <experiments>3</experiments>
</comment>
<comment type="interaction">
    <interactant intactId="EBI-12408727">
        <id>Q5W111-2</id>
    </interactant>
    <interactant intactId="EBI-745213">
        <id>P29972</id>
        <label>AQP1</label>
    </interactant>
    <organismsDiffer>false</organismsDiffer>
    <experiments>3</experiments>
</comment>
<comment type="interaction">
    <interactant intactId="EBI-12408727">
        <id>Q5W111-2</id>
    </interactant>
    <interactant intactId="EBI-718729">
        <id>P55212</id>
        <label>CASP6</label>
    </interactant>
    <organismsDiffer>false</organismsDiffer>
    <experiments>3</experiments>
</comment>
<comment type="interaction">
    <interactant intactId="EBI-12408727">
        <id>Q5W111-2</id>
    </interactant>
    <interactant intactId="EBI-6624398">
        <id>P06307</id>
        <label>CCK</label>
    </interactant>
    <organismsDiffer>false</organismsDiffer>
    <experiments>3</experiments>
</comment>
<comment type="interaction">
    <interactant intactId="EBI-12408727">
        <id>Q5W111-2</id>
    </interactant>
    <interactant intactId="EBI-348399">
        <id>P22607</id>
        <label>FGFR3</label>
    </interactant>
    <organismsDiffer>false</organismsDiffer>
    <experiments>3</experiments>
</comment>
<comment type="interaction">
    <interactant intactId="EBI-12408727">
        <id>Q5W111-2</id>
    </interactant>
    <interactant intactId="EBI-8285963">
        <id>Q14957</id>
        <label>GRIN2C</label>
    </interactant>
    <organismsDiffer>false</organismsDiffer>
    <experiments>3</experiments>
</comment>
<comment type="interaction">
    <interactant intactId="EBI-12408727">
        <id>Q5W111-2</id>
    </interactant>
    <interactant intactId="EBI-351506">
        <id>P06396</id>
        <label>GSN</label>
    </interactant>
    <organismsDiffer>false</organismsDiffer>
    <experiments>3</experiments>
</comment>
<comment type="interaction">
    <interactant intactId="EBI-12408727">
        <id>Q5W111-2</id>
    </interactant>
    <interactant intactId="EBI-10329202">
        <id>Q9Y5R4</id>
        <label>HEMK1</label>
    </interactant>
    <organismsDiffer>false</organismsDiffer>
    <experiments>3</experiments>
</comment>
<comment type="interaction">
    <interactant intactId="EBI-12408727">
        <id>Q5W111-2</id>
    </interactant>
    <interactant intactId="EBI-473886">
        <id>O00291</id>
        <label>HIP1</label>
    </interactant>
    <organismsDiffer>false</organismsDiffer>
    <experiments>3</experiments>
</comment>
<comment type="interaction">
    <interactant intactId="EBI-12408727">
        <id>Q5W111-2</id>
    </interactant>
    <interactant intactId="EBI-741158">
        <id>Q96HA8</id>
        <label>NTAQ1</label>
    </interactant>
    <organismsDiffer>false</organismsDiffer>
    <experiments>3</experiments>
</comment>
<comment type="interaction">
    <interactant intactId="EBI-12408727">
        <id>Q5W111-2</id>
    </interactant>
    <interactant intactId="EBI-740446">
        <id>P32242</id>
        <label>OTX1</label>
    </interactant>
    <organismsDiffer>false</organismsDiffer>
    <experiments>3</experiments>
</comment>
<comment type="interaction">
    <interactant intactId="EBI-12408727">
        <id>Q5W111-2</id>
    </interactant>
    <interactant intactId="EBI-1389308">
        <id>Q7Z3K3</id>
        <label>POGZ</label>
    </interactant>
    <organismsDiffer>false</organismsDiffer>
    <experiments>3</experiments>
</comment>
<comment type="interaction">
    <interactant intactId="EBI-12408727">
        <id>Q5W111-2</id>
    </interactant>
    <interactant intactId="EBI-5280197">
        <id>O75400-2</id>
        <label>PRPF40A</label>
    </interactant>
    <organismsDiffer>false</organismsDiffer>
    <experiments>3</experiments>
</comment>
<comment type="interaction">
    <interactant intactId="EBI-12408727">
        <id>Q5W111-2</id>
    </interactant>
    <interactant intactId="EBI-286642">
        <id>P62826</id>
        <label>RAN</label>
    </interactant>
    <organismsDiffer>false</organismsDiffer>
    <experiments>3</experiments>
</comment>
<comment type="interaction">
    <interactant intactId="EBI-12408727">
        <id>Q5W111-2</id>
    </interactant>
    <interactant intactId="EBI-3939165">
        <id>O43711</id>
        <label>TLX3</label>
    </interactant>
    <organismsDiffer>false</organismsDiffer>
    <experiments>3</experiments>
</comment>
<comment type="interaction">
    <interactant intactId="EBI-12408727">
        <id>Q5W111-2</id>
    </interactant>
    <interactant intactId="EBI-2107455">
        <id>Q08AM6</id>
        <label>VAC14</label>
    </interactant>
    <organismsDiffer>false</organismsDiffer>
    <experiments>3</experiments>
</comment>
<comment type="interaction">
    <interactant intactId="EBI-12408727">
        <id>Q5W111-2</id>
    </interactant>
    <interactant intactId="EBI-25900580">
        <id>Q9Y649</id>
    </interactant>
    <organismsDiffer>false</organismsDiffer>
    <experiments>3</experiments>
</comment>
<comment type="alternative products">
    <event type="alternative splicing"/>
    <isoform>
        <id>Q5W111-1</id>
        <name>1</name>
        <sequence type="displayed"/>
    </isoform>
    <isoform>
        <id>Q5W111-2</id>
        <name>2</name>
        <sequence type="described" ref="VSP_019498"/>
    </isoform>
</comment>
<comment type="sequence caution" evidence="4">
    <conflict type="erroneous initiation">
        <sequence resource="EMBL-CDS" id="AAC09363"/>
    </conflict>
    <text>Extended N-terminus.</text>
</comment>
<gene>
    <name type="primary">SPRYD7</name>
    <name type="synonym">C13orf1</name>
    <name type="synonym">CLLD6</name>
</gene>
<dbReference type="EMBL" id="AF334405">
    <property type="protein sequence ID" value="AAK38371.1"/>
    <property type="molecule type" value="mRNA"/>
</dbReference>
<dbReference type="EMBL" id="AF055016">
    <property type="protein sequence ID" value="AAC09363.1"/>
    <property type="status" value="ALT_INIT"/>
    <property type="molecule type" value="mRNA"/>
</dbReference>
<dbReference type="EMBL" id="AK290576">
    <property type="protein sequence ID" value="BAF83265.1"/>
    <property type="molecule type" value="mRNA"/>
</dbReference>
<dbReference type="EMBL" id="AL136123">
    <property type="status" value="NOT_ANNOTATED_CDS"/>
    <property type="molecule type" value="Genomic_DNA"/>
</dbReference>
<dbReference type="EMBL" id="CH471075">
    <property type="protein sequence ID" value="EAX08843.1"/>
    <property type="molecule type" value="Genomic_DNA"/>
</dbReference>
<dbReference type="EMBL" id="BC022519">
    <property type="protein sequence ID" value="AAH22519.1"/>
    <property type="molecule type" value="mRNA"/>
</dbReference>
<dbReference type="CCDS" id="CCDS45046.1">
    <molecule id="Q5W111-2"/>
</dbReference>
<dbReference type="CCDS" id="CCDS9422.1">
    <molecule id="Q5W111-1"/>
</dbReference>
<dbReference type="RefSeq" id="NP_001120954.1">
    <molecule id="Q5W111-2"/>
    <property type="nucleotide sequence ID" value="NM_001127482.3"/>
</dbReference>
<dbReference type="RefSeq" id="NP_065189.1">
    <molecule id="Q5W111-1"/>
    <property type="nucleotide sequence ID" value="NM_020456.4"/>
</dbReference>
<dbReference type="PDB" id="7CCB">
    <property type="method" value="X-ray"/>
    <property type="resolution" value="1.62 A"/>
    <property type="chains" value="A/B=15-191"/>
</dbReference>
<dbReference type="PDBsum" id="7CCB"/>
<dbReference type="SMR" id="Q5W111"/>
<dbReference type="BioGRID" id="121451">
    <property type="interactions" value="51"/>
</dbReference>
<dbReference type="FunCoup" id="Q5W111">
    <property type="interactions" value="820"/>
</dbReference>
<dbReference type="IntAct" id="Q5W111">
    <property type="interactions" value="46"/>
</dbReference>
<dbReference type="STRING" id="9606.ENSP00000354774"/>
<dbReference type="iPTMnet" id="Q5W111"/>
<dbReference type="PhosphoSitePlus" id="Q5W111"/>
<dbReference type="SwissPalm" id="Q5W111"/>
<dbReference type="BioMuta" id="SPRYD7"/>
<dbReference type="DMDM" id="109821809"/>
<dbReference type="jPOST" id="Q5W111"/>
<dbReference type="MassIVE" id="Q5W111"/>
<dbReference type="PaxDb" id="9606-ENSP00000354774"/>
<dbReference type="PeptideAtlas" id="Q5W111"/>
<dbReference type="ProteomicsDB" id="65791">
    <molecule id="Q5W111-1"/>
</dbReference>
<dbReference type="ProteomicsDB" id="65792">
    <molecule id="Q5W111-2"/>
</dbReference>
<dbReference type="Pumba" id="Q5W111"/>
<dbReference type="Antibodypedia" id="24000">
    <property type="antibodies" value="45 antibodies from 14 providers"/>
</dbReference>
<dbReference type="DNASU" id="57213"/>
<dbReference type="Ensembl" id="ENST00000361840.8">
    <molecule id="Q5W111-1"/>
    <property type="protein sequence ID" value="ENSP00000354774.3"/>
    <property type="gene ID" value="ENSG00000123178.16"/>
</dbReference>
<dbReference type="Ensembl" id="ENST00000378195.6">
    <molecule id="Q5W111-2"/>
    <property type="protein sequence ID" value="ENSP00000367437.2"/>
    <property type="gene ID" value="ENSG00000123178.16"/>
</dbReference>
<dbReference type="GeneID" id="57213"/>
<dbReference type="KEGG" id="hsa:57213"/>
<dbReference type="MANE-Select" id="ENST00000361840.8">
    <property type="protein sequence ID" value="ENSP00000354774.3"/>
    <property type="RefSeq nucleotide sequence ID" value="NM_020456.4"/>
    <property type="RefSeq protein sequence ID" value="NP_065189.1"/>
</dbReference>
<dbReference type="UCSC" id="uc001vdl.3">
    <molecule id="Q5W111-1"/>
    <property type="organism name" value="human"/>
</dbReference>
<dbReference type="AGR" id="HGNC:14297"/>
<dbReference type="CTD" id="57213"/>
<dbReference type="DisGeNET" id="57213"/>
<dbReference type="GeneCards" id="SPRYD7"/>
<dbReference type="HGNC" id="HGNC:14297">
    <property type="gene designation" value="SPRYD7"/>
</dbReference>
<dbReference type="HPA" id="ENSG00000123178">
    <property type="expression patterns" value="Low tissue specificity"/>
</dbReference>
<dbReference type="MIM" id="607866">
    <property type="type" value="gene"/>
</dbReference>
<dbReference type="neXtProt" id="NX_Q5W111"/>
<dbReference type="OpenTargets" id="ENSG00000123178"/>
<dbReference type="PharmGKB" id="PA25511"/>
<dbReference type="VEuPathDB" id="HostDB:ENSG00000123178"/>
<dbReference type="eggNOG" id="KOG4030">
    <property type="taxonomic scope" value="Eukaryota"/>
</dbReference>
<dbReference type="GeneTree" id="ENSGT00390000011048"/>
<dbReference type="HOGENOM" id="CLU_085855_0_0_1"/>
<dbReference type="InParanoid" id="Q5W111"/>
<dbReference type="OMA" id="HMGNEVV"/>
<dbReference type="OrthoDB" id="40953at2759"/>
<dbReference type="PAN-GO" id="Q5W111">
    <property type="GO annotations" value="0 GO annotations based on evolutionary models"/>
</dbReference>
<dbReference type="PhylomeDB" id="Q5W111"/>
<dbReference type="TreeFam" id="TF314996"/>
<dbReference type="PathwayCommons" id="Q5W111"/>
<dbReference type="SignaLink" id="Q5W111"/>
<dbReference type="BioGRID-ORCS" id="57213">
    <property type="hits" value="12 hits in 1158 CRISPR screens"/>
</dbReference>
<dbReference type="ChiTaRS" id="SPRYD7">
    <property type="organism name" value="human"/>
</dbReference>
<dbReference type="GeneWiki" id="C13orf1"/>
<dbReference type="GenomeRNAi" id="57213"/>
<dbReference type="Pharos" id="Q5W111">
    <property type="development level" value="Tdark"/>
</dbReference>
<dbReference type="PRO" id="PR:Q5W111"/>
<dbReference type="Proteomes" id="UP000005640">
    <property type="component" value="Chromosome 13"/>
</dbReference>
<dbReference type="RNAct" id="Q5W111">
    <property type="molecule type" value="protein"/>
</dbReference>
<dbReference type="Bgee" id="ENSG00000123178">
    <property type="expression patterns" value="Expressed in gastrocnemius and 157 other cell types or tissues"/>
</dbReference>
<dbReference type="ExpressionAtlas" id="Q5W111">
    <property type="expression patterns" value="baseline and differential"/>
</dbReference>
<dbReference type="CDD" id="cd12880">
    <property type="entry name" value="SPRYD7"/>
    <property type="match status" value="1"/>
</dbReference>
<dbReference type="Gene3D" id="2.60.120.920">
    <property type="match status" value="1"/>
</dbReference>
<dbReference type="InterPro" id="IPR001870">
    <property type="entry name" value="B30.2/SPRY"/>
</dbReference>
<dbReference type="InterPro" id="IPR043136">
    <property type="entry name" value="B30.2/SPRY_sf"/>
</dbReference>
<dbReference type="InterPro" id="IPR013320">
    <property type="entry name" value="ConA-like_dom_sf"/>
</dbReference>
<dbReference type="InterPro" id="IPR003877">
    <property type="entry name" value="SPRY_dom"/>
</dbReference>
<dbReference type="InterPro" id="IPR035766">
    <property type="entry name" value="SPRYD7"/>
</dbReference>
<dbReference type="PANTHER" id="PTHR20951">
    <property type="entry name" value="C13ORF1 PROTEIN-RELATED"/>
    <property type="match status" value="1"/>
</dbReference>
<dbReference type="PANTHER" id="PTHR20951:SF2">
    <property type="entry name" value="SPRY DOMAIN-CONTAINING PROTEIN 7"/>
    <property type="match status" value="1"/>
</dbReference>
<dbReference type="Pfam" id="PF00622">
    <property type="entry name" value="SPRY"/>
    <property type="match status" value="1"/>
</dbReference>
<dbReference type="SMART" id="SM00449">
    <property type="entry name" value="SPRY"/>
    <property type="match status" value="1"/>
</dbReference>
<dbReference type="SUPFAM" id="SSF49899">
    <property type="entry name" value="Concanavalin A-like lectins/glucanases"/>
    <property type="match status" value="1"/>
</dbReference>
<dbReference type="PROSITE" id="PS50188">
    <property type="entry name" value="B302_SPRY"/>
    <property type="match status" value="1"/>
</dbReference>
<sequence length="196" mass="21666">MATSVLCCLRCCRDGGTGHIPLKEMPAVQLDTQHMGTDVVIVKNGRRICGTGGCLASAPLHQNKSYFEFKIQSTGIWGIGVATQKVNLNQIPLGRDMHSLVMRNDGALYHNNEEKNRLPANSLPQEGDVVGITYDHVELNVYLNGKNMHCPASGIRGTVYPVVYVDDSAILDCQFSEFYHTPPPGFEKILFEQQIF</sequence>
<reference key="1">
    <citation type="journal article" date="2001" name="Cancer Res.">
        <title>Cloning and characterization of CLLD6, CLLD7, and CLLD8, novel candidate genes for leukemogenesis at chromosome 13q14, a region commonly deleted in B-cell chronic lymphocytic leukemia.</title>
        <authorList>
            <person name="Mabuchi H."/>
            <person name="Fujii H."/>
            <person name="Calin G."/>
            <person name="Alder H."/>
            <person name="Negrini M."/>
            <person name="Rassenti L."/>
            <person name="Kipps T.J."/>
            <person name="Bullrich F."/>
            <person name="Croce C.M."/>
        </authorList>
    </citation>
    <scope>NUCLEOTIDE SEQUENCE [MRNA] (ISOFORM 1)</scope>
</reference>
<reference key="2">
    <citation type="submission" date="1998-03" db="EMBL/GenBank/DDBJ databases">
        <authorList>
            <person name="Yu W."/>
            <person name="Gibbs R.A."/>
        </authorList>
    </citation>
    <scope>NUCLEOTIDE SEQUENCE [LARGE SCALE MRNA] (ISOFORM 1)</scope>
    <source>
        <tissue>Brain</tissue>
    </source>
</reference>
<reference key="3">
    <citation type="journal article" date="2004" name="Nat. Genet.">
        <title>Complete sequencing and characterization of 21,243 full-length human cDNAs.</title>
        <authorList>
            <person name="Ota T."/>
            <person name="Suzuki Y."/>
            <person name="Nishikawa T."/>
            <person name="Otsuki T."/>
            <person name="Sugiyama T."/>
            <person name="Irie R."/>
            <person name="Wakamatsu A."/>
            <person name="Hayashi K."/>
            <person name="Sato H."/>
            <person name="Nagai K."/>
            <person name="Kimura K."/>
            <person name="Makita H."/>
            <person name="Sekine M."/>
            <person name="Obayashi M."/>
            <person name="Nishi T."/>
            <person name="Shibahara T."/>
            <person name="Tanaka T."/>
            <person name="Ishii S."/>
            <person name="Yamamoto J."/>
            <person name="Saito K."/>
            <person name="Kawai Y."/>
            <person name="Isono Y."/>
            <person name="Nakamura Y."/>
            <person name="Nagahari K."/>
            <person name="Murakami K."/>
            <person name="Yasuda T."/>
            <person name="Iwayanagi T."/>
            <person name="Wagatsuma M."/>
            <person name="Shiratori A."/>
            <person name="Sudo H."/>
            <person name="Hosoiri T."/>
            <person name="Kaku Y."/>
            <person name="Kodaira H."/>
            <person name="Kondo H."/>
            <person name="Sugawara M."/>
            <person name="Takahashi M."/>
            <person name="Kanda K."/>
            <person name="Yokoi T."/>
            <person name="Furuya T."/>
            <person name="Kikkawa E."/>
            <person name="Omura Y."/>
            <person name="Abe K."/>
            <person name="Kamihara K."/>
            <person name="Katsuta N."/>
            <person name="Sato K."/>
            <person name="Tanikawa M."/>
            <person name="Yamazaki M."/>
            <person name="Ninomiya K."/>
            <person name="Ishibashi T."/>
            <person name="Yamashita H."/>
            <person name="Murakawa K."/>
            <person name="Fujimori K."/>
            <person name="Tanai H."/>
            <person name="Kimata M."/>
            <person name="Watanabe M."/>
            <person name="Hiraoka S."/>
            <person name="Chiba Y."/>
            <person name="Ishida S."/>
            <person name="Ono Y."/>
            <person name="Takiguchi S."/>
            <person name="Watanabe S."/>
            <person name="Yosida M."/>
            <person name="Hotuta T."/>
            <person name="Kusano J."/>
            <person name="Kanehori K."/>
            <person name="Takahashi-Fujii A."/>
            <person name="Hara H."/>
            <person name="Tanase T.-O."/>
            <person name="Nomura Y."/>
            <person name="Togiya S."/>
            <person name="Komai F."/>
            <person name="Hara R."/>
            <person name="Takeuchi K."/>
            <person name="Arita M."/>
            <person name="Imose N."/>
            <person name="Musashino K."/>
            <person name="Yuuki H."/>
            <person name="Oshima A."/>
            <person name="Sasaki N."/>
            <person name="Aotsuka S."/>
            <person name="Yoshikawa Y."/>
            <person name="Matsunawa H."/>
            <person name="Ichihara T."/>
            <person name="Shiohata N."/>
            <person name="Sano S."/>
            <person name="Moriya S."/>
            <person name="Momiyama H."/>
            <person name="Satoh N."/>
            <person name="Takami S."/>
            <person name="Terashima Y."/>
            <person name="Suzuki O."/>
            <person name="Nakagawa S."/>
            <person name="Senoh A."/>
            <person name="Mizoguchi H."/>
            <person name="Goto Y."/>
            <person name="Shimizu F."/>
            <person name="Wakebe H."/>
            <person name="Hishigaki H."/>
            <person name="Watanabe T."/>
            <person name="Sugiyama A."/>
            <person name="Takemoto M."/>
            <person name="Kawakami B."/>
            <person name="Yamazaki M."/>
            <person name="Watanabe K."/>
            <person name="Kumagai A."/>
            <person name="Itakura S."/>
            <person name="Fukuzumi Y."/>
            <person name="Fujimori Y."/>
            <person name="Komiyama M."/>
            <person name="Tashiro H."/>
            <person name="Tanigami A."/>
            <person name="Fujiwara T."/>
            <person name="Ono T."/>
            <person name="Yamada K."/>
            <person name="Fujii Y."/>
            <person name="Ozaki K."/>
            <person name="Hirao M."/>
            <person name="Ohmori Y."/>
            <person name="Kawabata A."/>
            <person name="Hikiji T."/>
            <person name="Kobatake N."/>
            <person name="Inagaki H."/>
            <person name="Ikema Y."/>
            <person name="Okamoto S."/>
            <person name="Okitani R."/>
            <person name="Kawakami T."/>
            <person name="Noguchi S."/>
            <person name="Itoh T."/>
            <person name="Shigeta K."/>
            <person name="Senba T."/>
            <person name="Matsumura K."/>
            <person name="Nakajima Y."/>
            <person name="Mizuno T."/>
            <person name="Morinaga M."/>
            <person name="Sasaki M."/>
            <person name="Togashi T."/>
            <person name="Oyama M."/>
            <person name="Hata H."/>
            <person name="Watanabe M."/>
            <person name="Komatsu T."/>
            <person name="Mizushima-Sugano J."/>
            <person name="Satoh T."/>
            <person name="Shirai Y."/>
            <person name="Takahashi Y."/>
            <person name="Nakagawa K."/>
            <person name="Okumura K."/>
            <person name="Nagase T."/>
            <person name="Nomura N."/>
            <person name="Kikuchi H."/>
            <person name="Masuho Y."/>
            <person name="Yamashita R."/>
            <person name="Nakai K."/>
            <person name="Yada T."/>
            <person name="Nakamura Y."/>
            <person name="Ohara O."/>
            <person name="Isogai T."/>
            <person name="Sugano S."/>
        </authorList>
    </citation>
    <scope>NUCLEOTIDE SEQUENCE [LARGE SCALE MRNA] (ISOFORM 2)</scope>
</reference>
<reference key="4">
    <citation type="journal article" date="2004" name="Nature">
        <title>The DNA sequence and analysis of human chromosome 13.</title>
        <authorList>
            <person name="Dunham A."/>
            <person name="Matthews L.H."/>
            <person name="Burton J."/>
            <person name="Ashurst J.L."/>
            <person name="Howe K.L."/>
            <person name="Ashcroft K.J."/>
            <person name="Beare D.M."/>
            <person name="Burford D.C."/>
            <person name="Hunt S.E."/>
            <person name="Griffiths-Jones S."/>
            <person name="Jones M.C."/>
            <person name="Keenan S.J."/>
            <person name="Oliver K."/>
            <person name="Scott C.E."/>
            <person name="Ainscough R."/>
            <person name="Almeida J.P."/>
            <person name="Ambrose K.D."/>
            <person name="Andrews D.T."/>
            <person name="Ashwell R.I.S."/>
            <person name="Babbage A.K."/>
            <person name="Bagguley C.L."/>
            <person name="Bailey J."/>
            <person name="Bannerjee R."/>
            <person name="Barlow K.F."/>
            <person name="Bates K."/>
            <person name="Beasley H."/>
            <person name="Bird C.P."/>
            <person name="Bray-Allen S."/>
            <person name="Brown A.J."/>
            <person name="Brown J.Y."/>
            <person name="Burrill W."/>
            <person name="Carder C."/>
            <person name="Carter N.P."/>
            <person name="Chapman J.C."/>
            <person name="Clamp M.E."/>
            <person name="Clark S.Y."/>
            <person name="Clarke G."/>
            <person name="Clee C.M."/>
            <person name="Clegg S.C."/>
            <person name="Cobley V."/>
            <person name="Collins J.E."/>
            <person name="Corby N."/>
            <person name="Coville G.J."/>
            <person name="Deloukas P."/>
            <person name="Dhami P."/>
            <person name="Dunham I."/>
            <person name="Dunn M."/>
            <person name="Earthrowl M.E."/>
            <person name="Ellington A.G."/>
            <person name="Faulkner L."/>
            <person name="Frankish A.G."/>
            <person name="Frankland J."/>
            <person name="French L."/>
            <person name="Garner P."/>
            <person name="Garnett J."/>
            <person name="Gilbert J.G.R."/>
            <person name="Gilson C.J."/>
            <person name="Ghori J."/>
            <person name="Grafham D.V."/>
            <person name="Gribble S.M."/>
            <person name="Griffiths C."/>
            <person name="Hall R.E."/>
            <person name="Hammond S."/>
            <person name="Harley J.L."/>
            <person name="Hart E.A."/>
            <person name="Heath P.D."/>
            <person name="Howden P.J."/>
            <person name="Huckle E.J."/>
            <person name="Hunt P.J."/>
            <person name="Hunt A.R."/>
            <person name="Johnson C."/>
            <person name="Johnson D."/>
            <person name="Kay M."/>
            <person name="Kimberley A.M."/>
            <person name="King A."/>
            <person name="Laird G.K."/>
            <person name="Langford C.J."/>
            <person name="Lawlor S."/>
            <person name="Leongamornlert D.A."/>
            <person name="Lloyd D.M."/>
            <person name="Lloyd C."/>
            <person name="Loveland J.E."/>
            <person name="Lovell J."/>
            <person name="Martin S."/>
            <person name="Mashreghi-Mohammadi M."/>
            <person name="McLaren S.J."/>
            <person name="McMurray A."/>
            <person name="Milne S."/>
            <person name="Moore M.J.F."/>
            <person name="Nickerson T."/>
            <person name="Palmer S.A."/>
            <person name="Pearce A.V."/>
            <person name="Peck A.I."/>
            <person name="Pelan S."/>
            <person name="Phillimore B."/>
            <person name="Porter K.M."/>
            <person name="Rice C.M."/>
            <person name="Searle S."/>
            <person name="Sehra H.K."/>
            <person name="Shownkeen R."/>
            <person name="Skuce C.D."/>
            <person name="Smith M."/>
            <person name="Steward C.A."/>
            <person name="Sycamore N."/>
            <person name="Tester J."/>
            <person name="Thomas D.W."/>
            <person name="Tracey A."/>
            <person name="Tromans A."/>
            <person name="Tubby B."/>
            <person name="Wall M."/>
            <person name="Wallis J.M."/>
            <person name="West A.P."/>
            <person name="Whitehead S.L."/>
            <person name="Willey D.L."/>
            <person name="Wilming L."/>
            <person name="Wray P.W."/>
            <person name="Wright M.W."/>
            <person name="Young L."/>
            <person name="Coulson A."/>
            <person name="Durbin R.M."/>
            <person name="Hubbard T."/>
            <person name="Sulston J.E."/>
            <person name="Beck S."/>
            <person name="Bentley D.R."/>
            <person name="Rogers J."/>
            <person name="Ross M.T."/>
        </authorList>
    </citation>
    <scope>NUCLEOTIDE SEQUENCE [LARGE SCALE GENOMIC DNA]</scope>
</reference>
<reference key="5">
    <citation type="submission" date="2005-07" db="EMBL/GenBank/DDBJ databases">
        <authorList>
            <person name="Mural R.J."/>
            <person name="Istrail S."/>
            <person name="Sutton G.G."/>
            <person name="Florea L."/>
            <person name="Halpern A.L."/>
            <person name="Mobarry C.M."/>
            <person name="Lippert R."/>
            <person name="Walenz B."/>
            <person name="Shatkay H."/>
            <person name="Dew I."/>
            <person name="Miller J.R."/>
            <person name="Flanigan M.J."/>
            <person name="Edwards N.J."/>
            <person name="Bolanos R."/>
            <person name="Fasulo D."/>
            <person name="Halldorsson B.V."/>
            <person name="Hannenhalli S."/>
            <person name="Turner R."/>
            <person name="Yooseph S."/>
            <person name="Lu F."/>
            <person name="Nusskern D.R."/>
            <person name="Shue B.C."/>
            <person name="Zheng X.H."/>
            <person name="Zhong F."/>
            <person name="Delcher A.L."/>
            <person name="Huson D.H."/>
            <person name="Kravitz S.A."/>
            <person name="Mouchard L."/>
            <person name="Reinert K."/>
            <person name="Remington K.A."/>
            <person name="Clark A.G."/>
            <person name="Waterman M.S."/>
            <person name="Eichler E.E."/>
            <person name="Adams M.D."/>
            <person name="Hunkapiller M.W."/>
            <person name="Myers E.W."/>
            <person name="Venter J.C."/>
        </authorList>
    </citation>
    <scope>NUCLEOTIDE SEQUENCE [LARGE SCALE GENOMIC DNA]</scope>
</reference>
<reference key="6">
    <citation type="journal article" date="2004" name="Genome Res.">
        <title>The status, quality, and expansion of the NIH full-length cDNA project: the Mammalian Gene Collection (MGC).</title>
        <authorList>
            <consortium name="The MGC Project Team"/>
        </authorList>
    </citation>
    <scope>NUCLEOTIDE SEQUENCE [LARGE SCALE MRNA] (ISOFORM 2)</scope>
    <source>
        <tissue>Brain</tissue>
    </source>
</reference>
<reference key="7">
    <citation type="journal article" date="2011" name="BMC Syst. Biol.">
        <title>Initial characterization of the human central proteome.</title>
        <authorList>
            <person name="Burkard T.R."/>
            <person name="Planyavsky M."/>
            <person name="Kaupe I."/>
            <person name="Breitwieser F.P."/>
            <person name="Buerckstuemmer T."/>
            <person name="Bennett K.L."/>
            <person name="Superti-Furga G."/>
            <person name="Colinge J."/>
        </authorList>
    </citation>
    <scope>IDENTIFICATION BY MASS SPECTROMETRY [LARGE SCALE ANALYSIS]</scope>
</reference>
<reference key="8">
    <citation type="journal article" date="2012" name="Mol. Cell. Proteomics">
        <title>Comparative large-scale characterisation of plant vs. mammal proteins reveals similar and idiosyncratic N-alpha acetylation features.</title>
        <authorList>
            <person name="Bienvenut W.V."/>
            <person name="Sumpton D."/>
            <person name="Martinez A."/>
            <person name="Lilla S."/>
            <person name="Espagne C."/>
            <person name="Meinnel T."/>
            <person name="Giglione C."/>
        </authorList>
    </citation>
    <scope>ACETYLATION [LARGE SCALE ANALYSIS] AT ALA-2</scope>
    <scope>CLEAVAGE OF INITIATOR METHIONINE [LARGE SCALE ANALYSIS]</scope>
    <scope>IDENTIFICATION BY MASS SPECTROMETRY [LARGE SCALE ANALYSIS]</scope>
</reference>
<name>SPRY7_HUMAN</name>
<organism>
    <name type="scientific">Homo sapiens</name>
    <name type="common">Human</name>
    <dbReference type="NCBI Taxonomy" id="9606"/>
    <lineage>
        <taxon>Eukaryota</taxon>
        <taxon>Metazoa</taxon>
        <taxon>Chordata</taxon>
        <taxon>Craniata</taxon>
        <taxon>Vertebrata</taxon>
        <taxon>Euteleostomi</taxon>
        <taxon>Mammalia</taxon>
        <taxon>Eutheria</taxon>
        <taxon>Euarchontoglires</taxon>
        <taxon>Primates</taxon>
        <taxon>Haplorrhini</taxon>
        <taxon>Catarrhini</taxon>
        <taxon>Hominidae</taxon>
        <taxon>Homo</taxon>
    </lineage>
</organism>
<protein>
    <recommendedName>
        <fullName>SPRY domain-containing protein 7</fullName>
    </recommendedName>
    <alternativeName>
        <fullName>Chronic lymphocytic leukemia deletion region gene 6 protein</fullName>
        <shortName>CLL deletion region gene 6 protein</shortName>
    </alternativeName>
</protein>
<proteinExistence type="evidence at protein level"/>
<evidence type="ECO:0000255" key="1">
    <source>
        <dbReference type="PROSITE-ProRule" id="PRU00548"/>
    </source>
</evidence>
<evidence type="ECO:0000303" key="2">
    <source>
    </source>
</evidence>
<evidence type="ECO:0000303" key="3">
    <source>
    </source>
</evidence>
<evidence type="ECO:0000305" key="4"/>
<evidence type="ECO:0007744" key="5">
    <source>
    </source>
</evidence>
<evidence type="ECO:0007829" key="6">
    <source>
        <dbReference type="PDB" id="7CCB"/>
    </source>
</evidence>
<feature type="initiator methionine" description="Removed" evidence="5">
    <location>
        <position position="1"/>
    </location>
</feature>
<feature type="chain" id="PRO_0000243925" description="SPRY domain-containing protein 7">
    <location>
        <begin position="2"/>
        <end position="196"/>
    </location>
</feature>
<feature type="domain" description="B30.2/SPRY" evidence="1">
    <location>
        <begin position="2"/>
        <end position="184"/>
    </location>
</feature>
<feature type="modified residue" description="N-acetylalanine" evidence="5">
    <location>
        <position position="2"/>
    </location>
</feature>
<feature type="splice variant" id="VSP_019498" description="In isoform 2." evidence="2 3">
    <location>
        <begin position="37"/>
        <end position="75"/>
    </location>
</feature>
<feature type="sequence conflict" description="In Ref. 6; AAH22519." evidence="4" ref="6">
    <original>V</original>
    <variation>D</variation>
    <location>
        <position position="165"/>
    </location>
</feature>
<feature type="strand" evidence="6">
    <location>
        <begin position="30"/>
        <end position="35"/>
    </location>
</feature>
<feature type="strand" evidence="6">
    <location>
        <begin position="38"/>
        <end position="42"/>
    </location>
</feature>
<feature type="turn" evidence="6">
    <location>
        <begin position="43"/>
        <end position="46"/>
    </location>
</feature>
<feature type="strand" evidence="6">
    <location>
        <begin position="47"/>
        <end position="58"/>
    </location>
</feature>
<feature type="strand" evidence="6">
    <location>
        <begin position="62"/>
        <end position="73"/>
    </location>
</feature>
<feature type="strand" evidence="6">
    <location>
        <begin position="75"/>
        <end position="82"/>
    </location>
</feature>
<feature type="strand" evidence="6">
    <location>
        <begin position="99"/>
        <end position="103"/>
    </location>
</feature>
<feature type="strand" evidence="6">
    <location>
        <begin position="106"/>
        <end position="110"/>
    </location>
</feature>
<feature type="strand" evidence="6">
    <location>
        <begin position="113"/>
        <end position="117"/>
    </location>
</feature>
<feature type="strand" evidence="6">
    <location>
        <begin position="129"/>
        <end position="134"/>
    </location>
</feature>
<feature type="strand" evidence="6">
    <location>
        <begin position="136"/>
        <end position="143"/>
    </location>
</feature>
<feature type="strand" evidence="6">
    <location>
        <begin position="160"/>
        <end position="166"/>
    </location>
</feature>
<feature type="strand" evidence="6">
    <location>
        <begin position="170"/>
        <end position="177"/>
    </location>
</feature>
<keyword id="KW-0002">3D-structure</keyword>
<keyword id="KW-0007">Acetylation</keyword>
<keyword id="KW-0025">Alternative splicing</keyword>
<keyword id="KW-1267">Proteomics identification</keyword>
<keyword id="KW-1185">Reference proteome</keyword>